<evidence type="ECO:0000255" key="1">
    <source>
        <dbReference type="HAMAP-Rule" id="MF_00360"/>
    </source>
</evidence>
<evidence type="ECO:0000256" key="2">
    <source>
        <dbReference type="SAM" id="MobiDB-lite"/>
    </source>
</evidence>
<evidence type="ECO:0000305" key="3"/>
<sequence>MRHYEIIFIVHPDQSEQVSAMIERYSNMITERSGGIHRLEDWGRRQLTYPIQKLHKAHYILMNIECDQESLNELEHSFKFNDAILRHLVIRMNGPVTTPSPMMQDDKSKPDENSRGTAAPTVNVADDSASGAQVVAAEENDTQS</sequence>
<keyword id="KW-0687">Ribonucleoprotein</keyword>
<keyword id="KW-0689">Ribosomal protein</keyword>
<keyword id="KW-0694">RNA-binding</keyword>
<keyword id="KW-0699">rRNA-binding</keyword>
<comment type="function">
    <text evidence="1">Binds together with bS18 to 16S ribosomal RNA.</text>
</comment>
<comment type="similarity">
    <text evidence="1">Belongs to the bacterial ribosomal protein bS6 family.</text>
</comment>
<dbReference type="EMBL" id="CP000450">
    <property type="protein sequence ID" value="ABI60596.1"/>
    <property type="molecule type" value="Genomic_DNA"/>
</dbReference>
<dbReference type="RefSeq" id="WP_011635364.1">
    <property type="nucleotide sequence ID" value="NC_008344.1"/>
</dbReference>
<dbReference type="SMR" id="Q0ADI6"/>
<dbReference type="STRING" id="335283.Neut_2382"/>
<dbReference type="KEGG" id="net:Neut_2382"/>
<dbReference type="eggNOG" id="COG0360">
    <property type="taxonomic scope" value="Bacteria"/>
</dbReference>
<dbReference type="HOGENOM" id="CLU_113441_6_0_4"/>
<dbReference type="OrthoDB" id="9812702at2"/>
<dbReference type="Proteomes" id="UP000001966">
    <property type="component" value="Chromosome"/>
</dbReference>
<dbReference type="GO" id="GO:0022627">
    <property type="term" value="C:cytosolic small ribosomal subunit"/>
    <property type="evidence" value="ECO:0007669"/>
    <property type="project" value="TreeGrafter"/>
</dbReference>
<dbReference type="GO" id="GO:0070181">
    <property type="term" value="F:small ribosomal subunit rRNA binding"/>
    <property type="evidence" value="ECO:0007669"/>
    <property type="project" value="TreeGrafter"/>
</dbReference>
<dbReference type="GO" id="GO:0003735">
    <property type="term" value="F:structural constituent of ribosome"/>
    <property type="evidence" value="ECO:0007669"/>
    <property type="project" value="InterPro"/>
</dbReference>
<dbReference type="GO" id="GO:0006412">
    <property type="term" value="P:translation"/>
    <property type="evidence" value="ECO:0007669"/>
    <property type="project" value="UniProtKB-UniRule"/>
</dbReference>
<dbReference type="CDD" id="cd00473">
    <property type="entry name" value="bS6"/>
    <property type="match status" value="1"/>
</dbReference>
<dbReference type="Gene3D" id="3.30.70.60">
    <property type="match status" value="1"/>
</dbReference>
<dbReference type="HAMAP" id="MF_00360">
    <property type="entry name" value="Ribosomal_bS6"/>
    <property type="match status" value="1"/>
</dbReference>
<dbReference type="InterPro" id="IPR000529">
    <property type="entry name" value="Ribosomal_bS6"/>
</dbReference>
<dbReference type="InterPro" id="IPR035980">
    <property type="entry name" value="Ribosomal_bS6_sf"/>
</dbReference>
<dbReference type="InterPro" id="IPR020814">
    <property type="entry name" value="Ribosomal_S6_plastid/chlpt"/>
</dbReference>
<dbReference type="InterPro" id="IPR014717">
    <property type="entry name" value="Transl_elong_EF1B/ribsomal_bS6"/>
</dbReference>
<dbReference type="NCBIfam" id="TIGR00166">
    <property type="entry name" value="S6"/>
    <property type="match status" value="1"/>
</dbReference>
<dbReference type="PANTHER" id="PTHR21011">
    <property type="entry name" value="MITOCHONDRIAL 28S RIBOSOMAL PROTEIN S6"/>
    <property type="match status" value="1"/>
</dbReference>
<dbReference type="PANTHER" id="PTHR21011:SF1">
    <property type="entry name" value="SMALL RIBOSOMAL SUBUNIT PROTEIN BS6M"/>
    <property type="match status" value="1"/>
</dbReference>
<dbReference type="Pfam" id="PF01250">
    <property type="entry name" value="Ribosomal_S6"/>
    <property type="match status" value="1"/>
</dbReference>
<dbReference type="SUPFAM" id="SSF54995">
    <property type="entry name" value="Ribosomal protein S6"/>
    <property type="match status" value="1"/>
</dbReference>
<name>RS6_NITEC</name>
<reference key="1">
    <citation type="journal article" date="2007" name="Environ. Microbiol.">
        <title>Whole-genome analysis of the ammonia-oxidizing bacterium, Nitrosomonas eutropha C91: implications for niche adaptation.</title>
        <authorList>
            <person name="Stein L.Y."/>
            <person name="Arp D.J."/>
            <person name="Berube P.M."/>
            <person name="Chain P.S."/>
            <person name="Hauser L."/>
            <person name="Jetten M.S."/>
            <person name="Klotz M.G."/>
            <person name="Larimer F.W."/>
            <person name="Norton J.M."/>
            <person name="Op den Camp H.J.M."/>
            <person name="Shin M."/>
            <person name="Wei X."/>
        </authorList>
    </citation>
    <scope>NUCLEOTIDE SEQUENCE [LARGE SCALE GENOMIC DNA]</scope>
    <source>
        <strain>DSM 101675 / C91 / Nm57</strain>
    </source>
</reference>
<organism>
    <name type="scientific">Nitrosomonas eutropha (strain DSM 101675 / C91 / Nm57)</name>
    <dbReference type="NCBI Taxonomy" id="335283"/>
    <lineage>
        <taxon>Bacteria</taxon>
        <taxon>Pseudomonadati</taxon>
        <taxon>Pseudomonadota</taxon>
        <taxon>Betaproteobacteria</taxon>
        <taxon>Nitrosomonadales</taxon>
        <taxon>Nitrosomonadaceae</taxon>
        <taxon>Nitrosomonas</taxon>
    </lineage>
</organism>
<proteinExistence type="inferred from homology"/>
<accession>Q0ADI6</accession>
<gene>
    <name evidence="1" type="primary">rpsF</name>
    <name type="ordered locus">Neut_2382</name>
</gene>
<feature type="chain" id="PRO_1000005300" description="Small ribosomal subunit protein bS6">
    <location>
        <begin position="1"/>
        <end position="144"/>
    </location>
</feature>
<feature type="region of interest" description="Disordered" evidence="2">
    <location>
        <begin position="95"/>
        <end position="144"/>
    </location>
</feature>
<feature type="compositionally biased region" description="Basic and acidic residues" evidence="2">
    <location>
        <begin position="104"/>
        <end position="114"/>
    </location>
</feature>
<protein>
    <recommendedName>
        <fullName evidence="1">Small ribosomal subunit protein bS6</fullName>
    </recommendedName>
    <alternativeName>
        <fullName evidence="3">30S ribosomal protein S6</fullName>
    </alternativeName>
</protein>